<protein>
    <recommendedName>
        <fullName>Protein ERGIC-53-like</fullName>
    </recommendedName>
    <alternativeName>
        <fullName>ERGIC53-like protein</fullName>
    </alternativeName>
    <alternativeName>
        <fullName>Lectin mannose-binding 1-like</fullName>
        <shortName>LMAN1-like protein</shortName>
    </alternativeName>
    <alternativeName>
        <fullName>Sublingual acinar membrane protein</fullName>
        <shortName>Slamp</shortName>
    </alternativeName>
</protein>
<gene>
    <name type="primary">Lman1l</name>
    <name type="synonym">Ergl</name>
</gene>
<reference key="1">
    <citation type="journal article" date="2005" name="J. Histochem. Cytochem.">
        <title>Cloning and characterization of a novel animal lectin expressed in the rat sublingual gland.</title>
        <authorList>
            <person name="Sakulsak N."/>
            <person name="Wakayama T."/>
            <person name="Hipkaeo W."/>
            <person name="Yamamoto M."/>
            <person name="Iseki S."/>
        </authorList>
    </citation>
    <scope>NUCLEOTIDE SEQUENCE [MRNA] (ISOFORM 1)</scope>
</reference>
<reference key="2">
    <citation type="submission" date="2005-07" db="EMBL/GenBank/DDBJ databases">
        <authorList>
            <person name="Mural R.J."/>
            <person name="Adams M.D."/>
            <person name="Myers E.W."/>
            <person name="Smith H.O."/>
            <person name="Venter J.C."/>
        </authorList>
    </citation>
    <scope>NUCLEOTIDE SEQUENCE [LARGE SCALE GENOMIC DNA]</scope>
</reference>
<reference key="3">
    <citation type="journal article" date="2004" name="Genome Res.">
        <title>The status, quality, and expansion of the NIH full-length cDNA project: the Mammalian Gene Collection (MGC).</title>
        <authorList>
            <consortium name="The MGC Project Team"/>
        </authorList>
    </citation>
    <scope>NUCLEOTIDE SEQUENCE [LARGE SCALE MRNA] (ISOFORM 2)</scope>
    <source>
        <tissue>Salivary gland</tissue>
    </source>
</reference>
<sequence>MLEIRGLSPSLCLLSLLLVLHGAERSQPPPRRRFEYKLSFKGPRLAVPGAGIPFWSHHGDAILGLEEVRLVPSMKNRSGAVWSNISVSFPSWEVEMQMRVTGPGRRGAQGVAMWYTKDRAQVGSVVEELASWDGIGIYFDSSTSDVQDSPVIRVLASDGHDLQEQSGDGNVRELGSCHRDFRNRPFPFRARVTYWRQRLRVSLSGGLTPKDPEEVCVDVEPLFLAPGGFFGVSAATGTLAADDHDVLSFLTFSLREPGPEETPQPFMEKDQLLLARKLEELKARLALGTREASIPPLNPKAQEEGERFFNLEDTLGRQSQILQALQALSRQMAQAEKHWKQQLGSTVQVRPEGGWNTAKVSTLLYGQRTLIQALQEMREAAARMASGAHVFYLPVGTKHHFFELDHILSLLQKDLRGLVKKTAKAPRPSGWLLGSSTCLHTSIFLFFLLLQTVGFFCYVNFSRQELDKRLQEYLSTGSLSLEPALPITRTIGVLRRQPISPSMQA</sequence>
<dbReference type="EMBL" id="AB211986">
    <property type="protein sequence ID" value="BAE16262.1"/>
    <property type="molecule type" value="mRNA"/>
</dbReference>
<dbReference type="EMBL" id="CH466522">
    <property type="protein sequence ID" value="EDL25917.1"/>
    <property type="molecule type" value="Genomic_DNA"/>
</dbReference>
<dbReference type="EMBL" id="BC020188">
    <property type="protein sequence ID" value="AAH20188.1"/>
    <property type="molecule type" value="mRNA"/>
</dbReference>
<dbReference type="CCDS" id="CCDS52810.1">
    <molecule id="Q8VCD3-1"/>
</dbReference>
<dbReference type="RefSeq" id="NP_954692.2">
    <molecule id="Q8VCD3-1"/>
    <property type="nucleotide sequence ID" value="NM_199222.3"/>
</dbReference>
<dbReference type="SMR" id="Q8VCD3"/>
<dbReference type="BioGRID" id="231657">
    <property type="interactions" value="7"/>
</dbReference>
<dbReference type="FunCoup" id="Q8VCD3">
    <property type="interactions" value="171"/>
</dbReference>
<dbReference type="STRING" id="10090.ENSMUSP00000091352"/>
<dbReference type="GlyCosmos" id="Q8VCD3">
    <property type="glycosylation" value="1 site, No reported glycans"/>
</dbReference>
<dbReference type="GlyGen" id="Q8VCD3">
    <property type="glycosylation" value="1 site"/>
</dbReference>
<dbReference type="PhosphoSitePlus" id="Q8VCD3"/>
<dbReference type="jPOST" id="Q8VCD3"/>
<dbReference type="PaxDb" id="10090-ENSMUSP00000091352"/>
<dbReference type="ProteomicsDB" id="292267">
    <molecule id="Q8VCD3-1"/>
</dbReference>
<dbReference type="ProteomicsDB" id="292268">
    <molecule id="Q8VCD3-2"/>
</dbReference>
<dbReference type="Antibodypedia" id="55435">
    <property type="antibodies" value="96 antibodies from 16 providers"/>
</dbReference>
<dbReference type="DNASU" id="235416"/>
<dbReference type="Ensembl" id="ENSMUST00000044937.5">
    <molecule id="Q8VCD3-2"/>
    <property type="protein sequence ID" value="ENSMUSP00000041631.5"/>
    <property type="gene ID" value="ENSMUSG00000056271.14"/>
</dbReference>
<dbReference type="Ensembl" id="ENSMUST00000093832.11">
    <molecule id="Q8VCD3-1"/>
    <property type="protein sequence ID" value="ENSMUSP00000091352.5"/>
    <property type="gene ID" value="ENSMUSG00000056271.14"/>
</dbReference>
<dbReference type="GeneID" id="235416"/>
<dbReference type="KEGG" id="mmu:235416"/>
<dbReference type="UCSC" id="uc009pvi.2">
    <molecule id="Q8VCD3-1"/>
    <property type="organism name" value="mouse"/>
</dbReference>
<dbReference type="AGR" id="MGI:2667537"/>
<dbReference type="CTD" id="79748"/>
<dbReference type="MGI" id="MGI:2667537">
    <property type="gene designation" value="Lman1l"/>
</dbReference>
<dbReference type="VEuPathDB" id="HostDB:ENSMUSG00000056271"/>
<dbReference type="eggNOG" id="KOG3838">
    <property type="taxonomic scope" value="Eukaryota"/>
</dbReference>
<dbReference type="GeneTree" id="ENSGT00940000161890"/>
<dbReference type="HOGENOM" id="CLU_041093_4_1_1"/>
<dbReference type="InParanoid" id="Q8VCD3"/>
<dbReference type="OMA" id="IRPEGGW"/>
<dbReference type="OrthoDB" id="10265193at2759"/>
<dbReference type="PhylomeDB" id="Q8VCD3"/>
<dbReference type="TreeFam" id="TF313311"/>
<dbReference type="Reactome" id="R-MMU-204005">
    <property type="pathway name" value="COPII-mediated vesicle transport"/>
</dbReference>
<dbReference type="Reactome" id="R-MMU-5694530">
    <property type="pathway name" value="Cargo concentration in the ER"/>
</dbReference>
<dbReference type="BioGRID-ORCS" id="235416">
    <property type="hits" value="1 hit in 76 CRISPR screens"/>
</dbReference>
<dbReference type="ChiTaRS" id="Lman1l">
    <property type="organism name" value="mouse"/>
</dbReference>
<dbReference type="PRO" id="PR:Q8VCD3"/>
<dbReference type="Proteomes" id="UP000000589">
    <property type="component" value="Chromosome 9"/>
</dbReference>
<dbReference type="RNAct" id="Q8VCD3">
    <property type="molecule type" value="protein"/>
</dbReference>
<dbReference type="Bgee" id="ENSMUSG00000056271">
    <property type="expression patterns" value="Expressed in submandibular gland and 13 other cell types or tissues"/>
</dbReference>
<dbReference type="GO" id="GO:0033116">
    <property type="term" value="C:endoplasmic reticulum-Golgi intermediate compartment membrane"/>
    <property type="evidence" value="ECO:0007669"/>
    <property type="project" value="UniProtKB-SubCell"/>
</dbReference>
<dbReference type="GO" id="GO:0030246">
    <property type="term" value="F:carbohydrate binding"/>
    <property type="evidence" value="ECO:0007669"/>
    <property type="project" value="UniProtKB-KW"/>
</dbReference>
<dbReference type="CDD" id="cd06902">
    <property type="entry name" value="lectin_ERGIC-53_ERGL"/>
    <property type="match status" value="1"/>
</dbReference>
<dbReference type="FunFam" id="2.60.120.200:FF:000028">
    <property type="entry name" value="Blast:Protein ERGIC-53"/>
    <property type="match status" value="1"/>
</dbReference>
<dbReference type="Gene3D" id="2.60.120.200">
    <property type="match status" value="1"/>
</dbReference>
<dbReference type="InterPro" id="IPR013320">
    <property type="entry name" value="ConA-like_dom_sf"/>
</dbReference>
<dbReference type="InterPro" id="IPR051136">
    <property type="entry name" value="Intracellular_Lectin-GPT"/>
</dbReference>
<dbReference type="InterPro" id="IPR005052">
    <property type="entry name" value="Lectin_leg"/>
</dbReference>
<dbReference type="PANTHER" id="PTHR12223:SF31">
    <property type="entry name" value="PROTEIN ERGIC-53-LIKE"/>
    <property type="match status" value="1"/>
</dbReference>
<dbReference type="PANTHER" id="PTHR12223">
    <property type="entry name" value="VESICULAR MANNOSE-BINDING LECTIN"/>
    <property type="match status" value="1"/>
</dbReference>
<dbReference type="Pfam" id="PF03388">
    <property type="entry name" value="Lectin_leg-like"/>
    <property type="match status" value="1"/>
</dbReference>
<dbReference type="SUPFAM" id="SSF49899">
    <property type="entry name" value="Concanavalin A-like lectins/glucanases"/>
    <property type="match status" value="1"/>
</dbReference>
<dbReference type="PROSITE" id="PS51328">
    <property type="entry name" value="L_LECTIN_LIKE"/>
    <property type="match status" value="1"/>
</dbReference>
<evidence type="ECO:0000250" key="1"/>
<evidence type="ECO:0000255" key="2"/>
<evidence type="ECO:0000255" key="3">
    <source>
        <dbReference type="PROSITE-ProRule" id="PRU00658"/>
    </source>
</evidence>
<evidence type="ECO:0000303" key="4">
    <source>
    </source>
</evidence>
<name>LMA1L_MOUSE</name>
<keyword id="KW-0025">Alternative splicing</keyword>
<keyword id="KW-1015">Disulfide bond</keyword>
<keyword id="KW-0325">Glycoprotein</keyword>
<keyword id="KW-0430">Lectin</keyword>
<keyword id="KW-0472">Membrane</keyword>
<keyword id="KW-1185">Reference proteome</keyword>
<keyword id="KW-0732">Signal</keyword>
<keyword id="KW-0812">Transmembrane</keyword>
<keyword id="KW-1133">Transmembrane helix</keyword>
<proteinExistence type="evidence at transcript level"/>
<feature type="signal peptide" evidence="2">
    <location>
        <begin position="1"/>
        <end position="25"/>
    </location>
</feature>
<feature type="chain" id="PRO_0000017664" description="Protein ERGIC-53-like">
    <location>
        <begin position="26"/>
        <end position="505"/>
    </location>
</feature>
<feature type="topological domain" description="Lumenal" evidence="2">
    <location>
        <begin position="26"/>
        <end position="438"/>
    </location>
</feature>
<feature type="transmembrane region" description="Helical" evidence="2">
    <location>
        <begin position="439"/>
        <end position="459"/>
    </location>
</feature>
<feature type="topological domain" description="Cytoplasmic" evidence="2">
    <location>
        <begin position="460"/>
        <end position="505"/>
    </location>
</feature>
<feature type="domain" description="L-type lectin-like" evidence="3">
    <location>
        <begin position="32"/>
        <end position="254"/>
    </location>
</feature>
<feature type="glycosylation site" description="N-linked (GlcNAc...) asparagine" evidence="2">
    <location>
        <position position="84"/>
    </location>
</feature>
<feature type="disulfide bond" evidence="3">
    <location>
        <begin position="177"/>
        <end position="216"/>
    </location>
</feature>
<feature type="splice variant" id="VSP_039811" description="In isoform 2." evidence="4">
    <original>NTAKVSTLLYGQRTLIQAL</original>
    <variation>GSSCPDGFRSTRLLPACGH</variation>
    <location>
        <begin position="356"/>
        <end position="374"/>
    </location>
</feature>
<feature type="splice variant" id="VSP_039812" description="In isoform 2." evidence="4">
    <location>
        <begin position="375"/>
        <end position="505"/>
    </location>
</feature>
<comment type="subcellular location">
    <subcellularLocation>
        <location evidence="1">Endoplasmic reticulum-Golgi intermediate compartment membrane</location>
        <topology evidence="1">Single-pass type I membrane protein</topology>
    </subcellularLocation>
</comment>
<comment type="alternative products">
    <event type="alternative splicing"/>
    <isoform>
        <id>Q8VCD3-1</id>
        <name>1</name>
        <sequence type="displayed"/>
    </isoform>
    <isoform>
        <id>Q8VCD3-2</id>
        <name>2</name>
        <sequence type="described" ref="VSP_039811 VSP_039812"/>
    </isoform>
</comment>
<accession>Q8VCD3</accession>
<accession>Q4H2F4</accession>
<organism>
    <name type="scientific">Mus musculus</name>
    <name type="common">Mouse</name>
    <dbReference type="NCBI Taxonomy" id="10090"/>
    <lineage>
        <taxon>Eukaryota</taxon>
        <taxon>Metazoa</taxon>
        <taxon>Chordata</taxon>
        <taxon>Craniata</taxon>
        <taxon>Vertebrata</taxon>
        <taxon>Euteleostomi</taxon>
        <taxon>Mammalia</taxon>
        <taxon>Eutheria</taxon>
        <taxon>Euarchontoglires</taxon>
        <taxon>Glires</taxon>
        <taxon>Rodentia</taxon>
        <taxon>Myomorpha</taxon>
        <taxon>Muroidea</taxon>
        <taxon>Muridae</taxon>
        <taxon>Murinae</taxon>
        <taxon>Mus</taxon>
        <taxon>Mus</taxon>
    </lineage>
</organism>